<name>ILVC_PSYCK</name>
<keyword id="KW-0028">Amino-acid biosynthesis</keyword>
<keyword id="KW-0100">Branched-chain amino acid biosynthesis</keyword>
<keyword id="KW-0460">Magnesium</keyword>
<keyword id="KW-0479">Metal-binding</keyword>
<keyword id="KW-0521">NADP</keyword>
<keyword id="KW-0560">Oxidoreductase</keyword>
<accession>Q1QDE6</accession>
<dbReference type="EC" id="1.1.1.86" evidence="1"/>
<dbReference type="EMBL" id="CP000323">
    <property type="protein sequence ID" value="ABE74307.1"/>
    <property type="molecule type" value="Genomic_DNA"/>
</dbReference>
<dbReference type="RefSeq" id="WP_011512878.1">
    <property type="nucleotide sequence ID" value="NC_007969.1"/>
</dbReference>
<dbReference type="SMR" id="Q1QDE6"/>
<dbReference type="STRING" id="335284.Pcryo_0524"/>
<dbReference type="KEGG" id="pcr:Pcryo_0524"/>
<dbReference type="eggNOG" id="COG0059">
    <property type="taxonomic scope" value="Bacteria"/>
</dbReference>
<dbReference type="HOGENOM" id="CLU_033821_0_1_6"/>
<dbReference type="UniPathway" id="UPA00047">
    <property type="reaction ID" value="UER00056"/>
</dbReference>
<dbReference type="UniPathway" id="UPA00049">
    <property type="reaction ID" value="UER00060"/>
</dbReference>
<dbReference type="Proteomes" id="UP000002425">
    <property type="component" value="Chromosome"/>
</dbReference>
<dbReference type="GO" id="GO:0005829">
    <property type="term" value="C:cytosol"/>
    <property type="evidence" value="ECO:0007669"/>
    <property type="project" value="TreeGrafter"/>
</dbReference>
<dbReference type="GO" id="GO:0004455">
    <property type="term" value="F:ketol-acid reductoisomerase activity"/>
    <property type="evidence" value="ECO:0007669"/>
    <property type="project" value="UniProtKB-UniRule"/>
</dbReference>
<dbReference type="GO" id="GO:0000287">
    <property type="term" value="F:magnesium ion binding"/>
    <property type="evidence" value="ECO:0007669"/>
    <property type="project" value="UniProtKB-UniRule"/>
</dbReference>
<dbReference type="GO" id="GO:0050661">
    <property type="term" value="F:NADP binding"/>
    <property type="evidence" value="ECO:0007669"/>
    <property type="project" value="InterPro"/>
</dbReference>
<dbReference type="GO" id="GO:0009097">
    <property type="term" value="P:isoleucine biosynthetic process"/>
    <property type="evidence" value="ECO:0007669"/>
    <property type="project" value="UniProtKB-UniRule"/>
</dbReference>
<dbReference type="GO" id="GO:0009099">
    <property type="term" value="P:L-valine biosynthetic process"/>
    <property type="evidence" value="ECO:0007669"/>
    <property type="project" value="UniProtKB-UniRule"/>
</dbReference>
<dbReference type="FunFam" id="3.40.50.720:FF:000023">
    <property type="entry name" value="Ketol-acid reductoisomerase (NADP(+))"/>
    <property type="match status" value="1"/>
</dbReference>
<dbReference type="Gene3D" id="6.10.240.10">
    <property type="match status" value="1"/>
</dbReference>
<dbReference type="Gene3D" id="3.40.50.720">
    <property type="entry name" value="NAD(P)-binding Rossmann-like Domain"/>
    <property type="match status" value="1"/>
</dbReference>
<dbReference type="HAMAP" id="MF_00435">
    <property type="entry name" value="IlvC"/>
    <property type="match status" value="1"/>
</dbReference>
<dbReference type="InterPro" id="IPR008927">
    <property type="entry name" value="6-PGluconate_DH-like_C_sf"/>
</dbReference>
<dbReference type="InterPro" id="IPR013023">
    <property type="entry name" value="KARI"/>
</dbReference>
<dbReference type="InterPro" id="IPR000506">
    <property type="entry name" value="KARI_C"/>
</dbReference>
<dbReference type="InterPro" id="IPR013116">
    <property type="entry name" value="KARI_N"/>
</dbReference>
<dbReference type="InterPro" id="IPR014359">
    <property type="entry name" value="KARI_prok"/>
</dbReference>
<dbReference type="InterPro" id="IPR036291">
    <property type="entry name" value="NAD(P)-bd_dom_sf"/>
</dbReference>
<dbReference type="NCBIfam" id="TIGR00465">
    <property type="entry name" value="ilvC"/>
    <property type="match status" value="1"/>
</dbReference>
<dbReference type="NCBIfam" id="NF004017">
    <property type="entry name" value="PRK05479.1"/>
    <property type="match status" value="1"/>
</dbReference>
<dbReference type="NCBIfam" id="NF009940">
    <property type="entry name" value="PRK13403.1"/>
    <property type="match status" value="1"/>
</dbReference>
<dbReference type="PANTHER" id="PTHR21371">
    <property type="entry name" value="KETOL-ACID REDUCTOISOMERASE, MITOCHONDRIAL"/>
    <property type="match status" value="1"/>
</dbReference>
<dbReference type="PANTHER" id="PTHR21371:SF1">
    <property type="entry name" value="KETOL-ACID REDUCTOISOMERASE, MITOCHONDRIAL"/>
    <property type="match status" value="1"/>
</dbReference>
<dbReference type="Pfam" id="PF01450">
    <property type="entry name" value="KARI_C"/>
    <property type="match status" value="1"/>
</dbReference>
<dbReference type="Pfam" id="PF07991">
    <property type="entry name" value="KARI_N"/>
    <property type="match status" value="1"/>
</dbReference>
<dbReference type="PIRSF" id="PIRSF000116">
    <property type="entry name" value="IlvC_gammaproteo"/>
    <property type="match status" value="1"/>
</dbReference>
<dbReference type="SUPFAM" id="SSF48179">
    <property type="entry name" value="6-phosphogluconate dehydrogenase C-terminal domain-like"/>
    <property type="match status" value="1"/>
</dbReference>
<dbReference type="SUPFAM" id="SSF51735">
    <property type="entry name" value="NAD(P)-binding Rossmann-fold domains"/>
    <property type="match status" value="1"/>
</dbReference>
<dbReference type="PROSITE" id="PS51851">
    <property type="entry name" value="KARI_C"/>
    <property type="match status" value="1"/>
</dbReference>
<dbReference type="PROSITE" id="PS51850">
    <property type="entry name" value="KARI_N"/>
    <property type="match status" value="1"/>
</dbReference>
<evidence type="ECO:0000255" key="1">
    <source>
        <dbReference type="HAMAP-Rule" id="MF_00435"/>
    </source>
</evidence>
<evidence type="ECO:0000255" key="2">
    <source>
        <dbReference type="PROSITE-ProRule" id="PRU01197"/>
    </source>
</evidence>
<evidence type="ECO:0000255" key="3">
    <source>
        <dbReference type="PROSITE-ProRule" id="PRU01198"/>
    </source>
</evidence>
<gene>
    <name evidence="1" type="primary">ilvC</name>
    <name type="ordered locus">Pcryo_0524</name>
</gene>
<sequence length="338" mass="36799">MNVYYDKDCDLSIVQGKKVAIIGYGSQGHAHALNLQDSNVDVTVGLRANSGSWKKAENAGLKVAEVEEAVKAADIIMILTPDEFQKELYNDVIEPNIKQGATLAFAHGFAIHYNQVIPRSDLDVIMVAPKAPGHTVRSEFAKGGGIPDLIAIYQDASGQAKQLALSYAAGVGGGRSGIIETTFKDETETDLFGEQAVLCGGAVELVKMGFETLTEAGYAPEMAYFECLHELKLIVDLMYEGGIADMNYSISNNAEYGEYVTGPEVINEQSREAMRNALKRIQSGEYAKMFISEGATNYPSMTARRRNNAEHQIEITGAKLRGMMPWIGGNKIIDKDKN</sequence>
<proteinExistence type="inferred from homology"/>
<protein>
    <recommendedName>
        <fullName evidence="1">Ketol-acid reductoisomerase (NADP(+))</fullName>
        <shortName evidence="1">KARI</shortName>
        <ecNumber evidence="1">1.1.1.86</ecNumber>
    </recommendedName>
    <alternativeName>
        <fullName evidence="1">Acetohydroxy-acid isomeroreductase</fullName>
        <shortName evidence="1">AHIR</shortName>
    </alternativeName>
    <alternativeName>
        <fullName evidence="1">Alpha-keto-beta-hydroxylacyl reductoisomerase</fullName>
    </alternativeName>
    <alternativeName>
        <fullName evidence="1">Ketol-acid reductoisomerase type 1</fullName>
    </alternativeName>
    <alternativeName>
        <fullName evidence="1">Ketol-acid reductoisomerase type I</fullName>
    </alternativeName>
</protein>
<comment type="function">
    <text evidence="1">Involved in the biosynthesis of branched-chain amino acids (BCAA). Catalyzes an alkyl-migration followed by a ketol-acid reduction of (S)-2-acetolactate (S2AL) to yield (R)-2,3-dihydroxy-isovalerate. In the isomerase reaction, S2AL is rearranged via a Mg-dependent methyl migration to produce 3-hydroxy-3-methyl-2-ketobutyrate (HMKB). In the reductase reaction, this 2-ketoacid undergoes a metal-dependent reduction by NADPH to yield (R)-2,3-dihydroxy-isovalerate.</text>
</comment>
<comment type="catalytic activity">
    <reaction evidence="1">
        <text>(2R)-2,3-dihydroxy-3-methylbutanoate + NADP(+) = (2S)-2-acetolactate + NADPH + H(+)</text>
        <dbReference type="Rhea" id="RHEA:22068"/>
        <dbReference type="ChEBI" id="CHEBI:15378"/>
        <dbReference type="ChEBI" id="CHEBI:49072"/>
        <dbReference type="ChEBI" id="CHEBI:57783"/>
        <dbReference type="ChEBI" id="CHEBI:58349"/>
        <dbReference type="ChEBI" id="CHEBI:58476"/>
        <dbReference type="EC" id="1.1.1.86"/>
    </reaction>
</comment>
<comment type="catalytic activity">
    <reaction evidence="1">
        <text>(2R,3R)-2,3-dihydroxy-3-methylpentanoate + NADP(+) = (S)-2-ethyl-2-hydroxy-3-oxobutanoate + NADPH + H(+)</text>
        <dbReference type="Rhea" id="RHEA:13493"/>
        <dbReference type="ChEBI" id="CHEBI:15378"/>
        <dbReference type="ChEBI" id="CHEBI:49256"/>
        <dbReference type="ChEBI" id="CHEBI:49258"/>
        <dbReference type="ChEBI" id="CHEBI:57783"/>
        <dbReference type="ChEBI" id="CHEBI:58349"/>
        <dbReference type="EC" id="1.1.1.86"/>
    </reaction>
</comment>
<comment type="cofactor">
    <cofactor evidence="1">
        <name>Mg(2+)</name>
        <dbReference type="ChEBI" id="CHEBI:18420"/>
    </cofactor>
    <text evidence="1">Binds 2 magnesium ions per subunit.</text>
</comment>
<comment type="pathway">
    <text evidence="1">Amino-acid biosynthesis; L-isoleucine biosynthesis; L-isoleucine from 2-oxobutanoate: step 2/4.</text>
</comment>
<comment type="pathway">
    <text evidence="1">Amino-acid biosynthesis; L-valine biosynthesis; L-valine from pyruvate: step 2/4.</text>
</comment>
<comment type="similarity">
    <text evidence="1">Belongs to the ketol-acid reductoisomerase family.</text>
</comment>
<organism>
    <name type="scientific">Psychrobacter cryohalolentis (strain ATCC BAA-1226 / DSM 17306 / VKM B-2378 / K5)</name>
    <dbReference type="NCBI Taxonomy" id="335284"/>
    <lineage>
        <taxon>Bacteria</taxon>
        <taxon>Pseudomonadati</taxon>
        <taxon>Pseudomonadota</taxon>
        <taxon>Gammaproteobacteria</taxon>
        <taxon>Moraxellales</taxon>
        <taxon>Moraxellaceae</taxon>
        <taxon>Psychrobacter</taxon>
    </lineage>
</organism>
<reference key="1">
    <citation type="submission" date="2006-03" db="EMBL/GenBank/DDBJ databases">
        <title>Complete sequence of chromosome of Psychrobacter cryohalolentis K5.</title>
        <authorList>
            <consortium name="US DOE Joint Genome Institute"/>
            <person name="Copeland A."/>
            <person name="Lucas S."/>
            <person name="Lapidus A."/>
            <person name="Barry K."/>
            <person name="Detter J.C."/>
            <person name="Glavina T."/>
            <person name="Hammon N."/>
            <person name="Israni S."/>
            <person name="Dalin E."/>
            <person name="Tice H."/>
            <person name="Pitluck S."/>
            <person name="Brettin T."/>
            <person name="Bruce D."/>
            <person name="Han C."/>
            <person name="Tapia R."/>
            <person name="Sims D.R."/>
            <person name="Gilna P."/>
            <person name="Schmutz J."/>
            <person name="Larimer F."/>
            <person name="Land M."/>
            <person name="Hauser L."/>
            <person name="Kyrpides N."/>
            <person name="Kim E."/>
            <person name="Richardson P."/>
        </authorList>
    </citation>
    <scope>NUCLEOTIDE SEQUENCE [LARGE SCALE GENOMIC DNA]</scope>
    <source>
        <strain>ATCC BAA-1226 / DSM 17306 / VKM B-2378 / K5</strain>
    </source>
</reference>
<feature type="chain" id="PRO_0000252774" description="Ketol-acid reductoisomerase (NADP(+))">
    <location>
        <begin position="1"/>
        <end position="338"/>
    </location>
</feature>
<feature type="domain" description="KARI N-terminal Rossmann" evidence="2">
    <location>
        <begin position="1"/>
        <end position="181"/>
    </location>
</feature>
<feature type="domain" description="KARI C-terminal knotted" evidence="3">
    <location>
        <begin position="182"/>
        <end position="327"/>
    </location>
</feature>
<feature type="active site" evidence="1">
    <location>
        <position position="107"/>
    </location>
</feature>
<feature type="binding site" evidence="1">
    <location>
        <begin position="24"/>
        <end position="27"/>
    </location>
    <ligand>
        <name>NADP(+)</name>
        <dbReference type="ChEBI" id="CHEBI:58349"/>
    </ligand>
</feature>
<feature type="binding site" evidence="1">
    <location>
        <position position="47"/>
    </location>
    <ligand>
        <name>NADP(+)</name>
        <dbReference type="ChEBI" id="CHEBI:58349"/>
    </ligand>
</feature>
<feature type="binding site" evidence="1">
    <location>
        <position position="50"/>
    </location>
    <ligand>
        <name>NADP(+)</name>
        <dbReference type="ChEBI" id="CHEBI:58349"/>
    </ligand>
</feature>
<feature type="binding site" evidence="1">
    <location>
        <position position="52"/>
    </location>
    <ligand>
        <name>NADP(+)</name>
        <dbReference type="ChEBI" id="CHEBI:58349"/>
    </ligand>
</feature>
<feature type="binding site" evidence="1">
    <location>
        <begin position="82"/>
        <end position="85"/>
    </location>
    <ligand>
        <name>NADP(+)</name>
        <dbReference type="ChEBI" id="CHEBI:58349"/>
    </ligand>
</feature>
<feature type="binding site" evidence="1">
    <location>
        <position position="133"/>
    </location>
    <ligand>
        <name>NADP(+)</name>
        <dbReference type="ChEBI" id="CHEBI:58349"/>
    </ligand>
</feature>
<feature type="binding site" evidence="1">
    <location>
        <position position="190"/>
    </location>
    <ligand>
        <name>Mg(2+)</name>
        <dbReference type="ChEBI" id="CHEBI:18420"/>
        <label>1</label>
    </ligand>
</feature>
<feature type="binding site" evidence="1">
    <location>
        <position position="190"/>
    </location>
    <ligand>
        <name>Mg(2+)</name>
        <dbReference type="ChEBI" id="CHEBI:18420"/>
        <label>2</label>
    </ligand>
</feature>
<feature type="binding site" evidence="1">
    <location>
        <position position="194"/>
    </location>
    <ligand>
        <name>Mg(2+)</name>
        <dbReference type="ChEBI" id="CHEBI:18420"/>
        <label>1</label>
    </ligand>
</feature>
<feature type="binding site" evidence="1">
    <location>
        <position position="226"/>
    </location>
    <ligand>
        <name>Mg(2+)</name>
        <dbReference type="ChEBI" id="CHEBI:18420"/>
        <label>2</label>
    </ligand>
</feature>
<feature type="binding site" evidence="1">
    <location>
        <position position="230"/>
    </location>
    <ligand>
        <name>Mg(2+)</name>
        <dbReference type="ChEBI" id="CHEBI:18420"/>
        <label>2</label>
    </ligand>
</feature>
<feature type="binding site" evidence="1">
    <location>
        <position position="251"/>
    </location>
    <ligand>
        <name>substrate</name>
    </ligand>
</feature>